<organism>
    <name type="scientific">Danio rerio</name>
    <name type="common">Zebrafish</name>
    <name type="synonym">Brachydanio rerio</name>
    <dbReference type="NCBI Taxonomy" id="7955"/>
    <lineage>
        <taxon>Eukaryota</taxon>
        <taxon>Metazoa</taxon>
        <taxon>Chordata</taxon>
        <taxon>Craniata</taxon>
        <taxon>Vertebrata</taxon>
        <taxon>Euteleostomi</taxon>
        <taxon>Actinopterygii</taxon>
        <taxon>Neopterygii</taxon>
        <taxon>Teleostei</taxon>
        <taxon>Ostariophysi</taxon>
        <taxon>Cypriniformes</taxon>
        <taxon>Danionidae</taxon>
        <taxon>Danioninae</taxon>
        <taxon>Danio</taxon>
    </lineage>
</organism>
<accession>A0A2R8QP51</accession>
<accession>A0A8M1NBI9</accession>
<sequence length="885" mass="101281">MYRGKRVKLEDETEGSWKSFAAVRMTAVDDISDSTEVVEMEDVPSQFFVEKHSWDGLRDIIHNSRMYSGMVINKAPHDFQFVQKHDESGPHSHRLYYLGMPYGSRENSLLYSEIPKKIRKEALLVLSWKQMLDHFQATPHHGVYSREEELLRERKRLGVFGITSYDYHAQSGLFLFQASNSLFYCRDGGHNGFIQAAPMKPMEIKTQCSGIRMDPKISPGDPSFIAFINNNDLWVTNIETAEERRLTFCHKGLNNVKEDPKSAGVATFVIQEEFDRFTGYWWSPAATEDADGGKTLQLLYEEVDESEVEIIHVPSPALEERKADVYRYPRTGSKNPQISLKLAEIRTDQQGKMISAQNKELVLPFTTLFPGVEYIARAGWTKDGKFAWAVLLDRSQQKLQLVLLPPALFIPVSVDDPQWEEHVEAMPEGVQPFIIYEEITDIWINVHDIFYPFIQTSNDKISFLWVNESQTGFCHLYRITSLLKPGCHQWSREYSPSEDDFKCSTEEEVALTSGEWEVLARHGSKIWVNEETKLVYFQGTKDTPLEHHLYVVSYESPGEIVRLTKPGFSHSCSVSQNFDMFISHYSNVSTPPCVHVYKLTGADSDPLHKEPEFWASMMEATGCRPDYIPPEIFSFPASSGFRLYGMLYKPHNLKPGKKHPTILFVYGGPQVQLVNNSYKGVKYLRLNTLASLGYAVVVIDGRGSCQRGLKFEGALKNKMGQVEIEDQVEGLQFVAEKYKFIDLSRVAIHGWSYGGFLSLMGLIHRPNIFKVAIAGAPVTVWMAYDTGYTERYMDVPENNQQGYEAGSVALHVDKLPNEPNRLLILHGFLDENVHFFHTNFLVSQLIRAGKPYQLQIYPNERHSIRCPESGEHYEIMLLYFLQQHL</sequence>
<protein>
    <recommendedName>
        <fullName evidence="4">Dipeptidyl peptidase 9</fullName>
        <ecNumber evidence="2">3.4.14.5</ecNumber>
    </recommendedName>
</protein>
<comment type="function">
    <text evidence="2 3">Dipeptidyl peptidase that cleaves off N-terminal dipeptides from proteins having a Pro or Ala residue at position 2 (By similarity). Acts as a key inhibitor of the NLRP1 inflammasome (PubMed:36112693).</text>
</comment>
<comment type="catalytic activity">
    <reaction evidence="2">
        <text>Release of an N-terminal dipeptide, Xaa-Yaa-|-Zaa-, from a polypeptide, preferentially when Yaa is Pro, provided Zaa is neither Pro nor hydroxyproline.</text>
        <dbReference type="EC" id="3.4.14.5"/>
    </reaction>
</comment>
<comment type="subunit">
    <text evidence="2">Homodimer. Forms a ternary complex with NLRP1, composed of a DPP9 homodimer, one full-length NLRP1 protein, and one cleaved C-terminus of NLRP1 (NACHT, LRR and PYD domains-containing protein 1, C-terminus).</text>
</comment>
<comment type="subcellular location">
    <subcellularLocation>
        <location evidence="2">Nucleus</location>
    </subcellularLocation>
</comment>
<comment type="disruption phenotype">
    <text evidence="3">Knockout animals display a marked reduction in body size and a significantly shorter life span.</text>
</comment>
<comment type="similarity">
    <text evidence="5">Belongs to the peptidase S9B family. DPPIV subfamily.</text>
</comment>
<feature type="chain" id="PRO_0000459357" description="Dipeptidyl peptidase 9">
    <location>
        <begin position="1"/>
        <end position="885"/>
    </location>
</feature>
<feature type="active site" description="Charge relay system" evidence="2">
    <location>
        <position position="752"/>
    </location>
</feature>
<feature type="active site" description="Charge relay system" evidence="1">
    <location>
        <position position="830"/>
    </location>
</feature>
<feature type="active site" description="Charge relay system" evidence="1">
    <location>
        <position position="862"/>
    </location>
</feature>
<feature type="binding site" description="covalent" evidence="2">
    <location>
        <position position="752"/>
    </location>
    <ligand>
        <name>Val-boroPro</name>
        <dbReference type="ChEBI" id="CHEBI:187904"/>
        <note>inhibitor</note>
    </ligand>
</feature>
<dbReference type="EC" id="3.4.14.5" evidence="2"/>
<dbReference type="EMBL" id="CR855877">
    <property type="status" value="NOT_ANNOTATED_CDS"/>
    <property type="molecule type" value="Genomic_DNA"/>
</dbReference>
<dbReference type="EMBL" id="CU499311">
    <property type="status" value="NOT_ANNOTATED_CDS"/>
    <property type="molecule type" value="Genomic_DNA"/>
</dbReference>
<dbReference type="RefSeq" id="NP_001070781.2">
    <property type="nucleotide sequence ID" value="NM_001077313.2"/>
</dbReference>
<dbReference type="SMR" id="A0A2R8QP51"/>
<dbReference type="FunCoup" id="A0A2R8QP51">
    <property type="interactions" value="1687"/>
</dbReference>
<dbReference type="STRING" id="7955.ENSDARP00000112347"/>
<dbReference type="PaxDb" id="7955-ENSDARP00000112347"/>
<dbReference type="Ensembl" id="ENSDART00000192605">
    <property type="protein sequence ID" value="ENSDARP00000156382"/>
    <property type="gene ID" value="ENSDARG00000052606"/>
</dbReference>
<dbReference type="GeneID" id="768170"/>
<dbReference type="KEGG" id="dre:768170"/>
<dbReference type="AGR" id="ZFIN:ZDB-GENE-061013-777"/>
<dbReference type="CTD" id="91039"/>
<dbReference type="ZFIN" id="ZDB-GENE-061013-777">
    <property type="gene designation" value="dpp9"/>
</dbReference>
<dbReference type="OMA" id="VTHMTPQ"/>
<dbReference type="OrthoDB" id="16520at2759"/>
<dbReference type="PRO" id="PR:A0A2R8QP51"/>
<dbReference type="Proteomes" id="UP000000437">
    <property type="component" value="Chromosome 8"/>
</dbReference>
<dbReference type="Bgee" id="ENSDARG00000052606">
    <property type="expression patterns" value="Expressed in mature ovarian follicle and 27 other cell types or tissues"/>
</dbReference>
<dbReference type="ExpressionAtlas" id="A0A2R8QP51">
    <property type="expression patterns" value="baseline and differential"/>
</dbReference>
<dbReference type="GO" id="GO:0005634">
    <property type="term" value="C:nucleus"/>
    <property type="evidence" value="ECO:0007669"/>
    <property type="project" value="UniProtKB-SubCell"/>
</dbReference>
<dbReference type="GO" id="GO:0004177">
    <property type="term" value="F:aminopeptidase activity"/>
    <property type="evidence" value="ECO:0007669"/>
    <property type="project" value="UniProtKB-KW"/>
</dbReference>
<dbReference type="GO" id="GO:0008239">
    <property type="term" value="F:dipeptidyl-peptidase activity"/>
    <property type="evidence" value="ECO:0000318"/>
    <property type="project" value="GO_Central"/>
</dbReference>
<dbReference type="GO" id="GO:0008236">
    <property type="term" value="F:serine-type peptidase activity"/>
    <property type="evidence" value="ECO:0007669"/>
    <property type="project" value="UniProtKB-KW"/>
</dbReference>
<dbReference type="GO" id="GO:0006508">
    <property type="term" value="P:proteolysis"/>
    <property type="evidence" value="ECO:0000318"/>
    <property type="project" value="GO_Central"/>
</dbReference>
<dbReference type="GO" id="GO:0050727">
    <property type="term" value="P:regulation of inflammatory response"/>
    <property type="evidence" value="ECO:0000315"/>
    <property type="project" value="ZFIN"/>
</dbReference>
<dbReference type="FunFam" id="2.140.10.30:FF:000002">
    <property type="entry name" value="Dipeptidyl peptidase 8-like isoform"/>
    <property type="match status" value="1"/>
</dbReference>
<dbReference type="FunFam" id="3.40.50.1820:FF:000016">
    <property type="entry name" value="Dipeptidyl peptidase 8-like isoform"/>
    <property type="match status" value="1"/>
</dbReference>
<dbReference type="Gene3D" id="3.40.50.1820">
    <property type="entry name" value="alpha/beta hydrolase"/>
    <property type="match status" value="1"/>
</dbReference>
<dbReference type="Gene3D" id="2.140.10.30">
    <property type="entry name" value="Dipeptidylpeptidase IV, N-terminal domain"/>
    <property type="match status" value="1"/>
</dbReference>
<dbReference type="InterPro" id="IPR029058">
    <property type="entry name" value="AB_hydrolase_fold"/>
</dbReference>
<dbReference type="InterPro" id="IPR045785">
    <property type="entry name" value="Dpp_8/9_N"/>
</dbReference>
<dbReference type="InterPro" id="IPR001375">
    <property type="entry name" value="Peptidase_S9_cat"/>
</dbReference>
<dbReference type="InterPro" id="IPR002469">
    <property type="entry name" value="Peptidase_S9B_N"/>
</dbReference>
<dbReference type="InterPro" id="IPR050278">
    <property type="entry name" value="Serine_Prot_S9B/DPPIV"/>
</dbReference>
<dbReference type="PANTHER" id="PTHR11731:SF193">
    <property type="entry name" value="DIPEPTIDYL PEPTIDASE 9"/>
    <property type="match status" value="1"/>
</dbReference>
<dbReference type="PANTHER" id="PTHR11731">
    <property type="entry name" value="PROTEASE FAMILY S9B,C DIPEPTIDYL-PEPTIDASE IV-RELATED"/>
    <property type="match status" value="1"/>
</dbReference>
<dbReference type="Pfam" id="PF19520">
    <property type="entry name" value="Dpp_8_9_N"/>
    <property type="match status" value="1"/>
</dbReference>
<dbReference type="Pfam" id="PF00930">
    <property type="entry name" value="DPPIV_N"/>
    <property type="match status" value="1"/>
</dbReference>
<dbReference type="Pfam" id="PF00326">
    <property type="entry name" value="Peptidase_S9"/>
    <property type="match status" value="1"/>
</dbReference>
<dbReference type="SUPFAM" id="SSF53474">
    <property type="entry name" value="alpha/beta-Hydrolases"/>
    <property type="match status" value="1"/>
</dbReference>
<dbReference type="SUPFAM" id="SSF82171">
    <property type="entry name" value="DPP6 N-terminal domain-like"/>
    <property type="match status" value="1"/>
</dbReference>
<reference key="1">
    <citation type="journal article" date="2013" name="Nature">
        <title>The zebrafish reference genome sequence and its relationship to the human genome.</title>
        <authorList>
            <person name="Howe K."/>
            <person name="Clark M.D."/>
            <person name="Torroja C.F."/>
            <person name="Torrance J."/>
            <person name="Berthelot C."/>
            <person name="Muffato M."/>
            <person name="Collins J.E."/>
            <person name="Humphray S."/>
            <person name="McLaren K."/>
            <person name="Matthews L."/>
            <person name="McLaren S."/>
            <person name="Sealy I."/>
            <person name="Caccamo M."/>
            <person name="Churcher C."/>
            <person name="Scott C."/>
            <person name="Barrett J.C."/>
            <person name="Koch R."/>
            <person name="Rauch G.J."/>
            <person name="White S."/>
            <person name="Chow W."/>
            <person name="Kilian B."/>
            <person name="Quintais L.T."/>
            <person name="Guerra-Assuncao J.A."/>
            <person name="Zhou Y."/>
            <person name="Gu Y."/>
            <person name="Yen J."/>
            <person name="Vogel J.H."/>
            <person name="Eyre T."/>
            <person name="Redmond S."/>
            <person name="Banerjee R."/>
            <person name="Chi J."/>
            <person name="Fu B."/>
            <person name="Langley E."/>
            <person name="Maguire S.F."/>
            <person name="Laird G.K."/>
            <person name="Lloyd D."/>
            <person name="Kenyon E."/>
            <person name="Donaldson S."/>
            <person name="Sehra H."/>
            <person name="Almeida-King J."/>
            <person name="Loveland J."/>
            <person name="Trevanion S."/>
            <person name="Jones M."/>
            <person name="Quail M."/>
            <person name="Willey D."/>
            <person name="Hunt A."/>
            <person name="Burton J."/>
            <person name="Sims S."/>
            <person name="McLay K."/>
            <person name="Plumb B."/>
            <person name="Davis J."/>
            <person name="Clee C."/>
            <person name="Oliver K."/>
            <person name="Clark R."/>
            <person name="Riddle C."/>
            <person name="Elliot D."/>
            <person name="Threadgold G."/>
            <person name="Harden G."/>
            <person name="Ware D."/>
            <person name="Begum S."/>
            <person name="Mortimore B."/>
            <person name="Kerry G."/>
            <person name="Heath P."/>
            <person name="Phillimore B."/>
            <person name="Tracey A."/>
            <person name="Corby N."/>
            <person name="Dunn M."/>
            <person name="Johnson C."/>
            <person name="Wood J."/>
            <person name="Clark S."/>
            <person name="Pelan S."/>
            <person name="Griffiths G."/>
            <person name="Smith M."/>
            <person name="Glithero R."/>
            <person name="Howden P."/>
            <person name="Barker N."/>
            <person name="Lloyd C."/>
            <person name="Stevens C."/>
            <person name="Harley J."/>
            <person name="Holt K."/>
            <person name="Panagiotidis G."/>
            <person name="Lovell J."/>
            <person name="Beasley H."/>
            <person name="Henderson C."/>
            <person name="Gordon D."/>
            <person name="Auger K."/>
            <person name="Wright D."/>
            <person name="Collins J."/>
            <person name="Raisen C."/>
            <person name="Dyer L."/>
            <person name="Leung K."/>
            <person name="Robertson L."/>
            <person name="Ambridge K."/>
            <person name="Leongamornlert D."/>
            <person name="McGuire S."/>
            <person name="Gilderthorp R."/>
            <person name="Griffiths C."/>
            <person name="Manthravadi D."/>
            <person name="Nichol S."/>
            <person name="Barker G."/>
            <person name="Whitehead S."/>
            <person name="Kay M."/>
            <person name="Brown J."/>
            <person name="Murnane C."/>
            <person name="Gray E."/>
            <person name="Humphries M."/>
            <person name="Sycamore N."/>
            <person name="Barker D."/>
            <person name="Saunders D."/>
            <person name="Wallis J."/>
            <person name="Babbage A."/>
            <person name="Hammond S."/>
            <person name="Mashreghi-Mohammadi M."/>
            <person name="Barr L."/>
            <person name="Martin S."/>
            <person name="Wray P."/>
            <person name="Ellington A."/>
            <person name="Matthews N."/>
            <person name="Ellwood M."/>
            <person name="Woodmansey R."/>
            <person name="Clark G."/>
            <person name="Cooper J."/>
            <person name="Tromans A."/>
            <person name="Grafham D."/>
            <person name="Skuce C."/>
            <person name="Pandian R."/>
            <person name="Andrews R."/>
            <person name="Harrison E."/>
            <person name="Kimberley A."/>
            <person name="Garnett J."/>
            <person name="Fosker N."/>
            <person name="Hall R."/>
            <person name="Garner P."/>
            <person name="Kelly D."/>
            <person name="Bird C."/>
            <person name="Palmer S."/>
            <person name="Gehring I."/>
            <person name="Berger A."/>
            <person name="Dooley C.M."/>
            <person name="Ersan-Urun Z."/>
            <person name="Eser C."/>
            <person name="Geiger H."/>
            <person name="Geisler M."/>
            <person name="Karotki L."/>
            <person name="Kirn A."/>
            <person name="Konantz J."/>
            <person name="Konantz M."/>
            <person name="Oberlander M."/>
            <person name="Rudolph-Geiger S."/>
            <person name="Teucke M."/>
            <person name="Lanz C."/>
            <person name="Raddatz G."/>
            <person name="Osoegawa K."/>
            <person name="Zhu B."/>
            <person name="Rapp A."/>
            <person name="Widaa S."/>
            <person name="Langford C."/>
            <person name="Yang F."/>
            <person name="Schuster S.C."/>
            <person name="Carter N.P."/>
            <person name="Harrow J."/>
            <person name="Ning Z."/>
            <person name="Herrero J."/>
            <person name="Searle S.M."/>
            <person name="Enright A."/>
            <person name="Geisler R."/>
            <person name="Plasterk R.H."/>
            <person name="Lee C."/>
            <person name="Westerfield M."/>
            <person name="de Jong P.J."/>
            <person name="Zon L.I."/>
            <person name="Postlethwait J.H."/>
            <person name="Nusslein-Volhard C."/>
            <person name="Hubbard T.J."/>
            <person name="Roest Crollius H."/>
            <person name="Rogers J."/>
            <person name="Stemple D.L."/>
        </authorList>
    </citation>
    <scope>NUCLEOTIDE SEQUENCE [LARGE SCALE GENOMIC DNA]</scope>
    <source>
        <strain>Tuebingen</strain>
    </source>
</reference>
<reference key="2">
    <citation type="journal article" date="2022" name="Sci. Immunol.">
        <title>DPP9 deficiency: An inflammasomopathy that can be rescued by lowering NLRP1/IL-1 signaling.</title>
        <authorList>
            <person name="Harapas C.R."/>
            <person name="Robinson K.S."/>
            <person name="Lay K."/>
            <person name="Wong J."/>
            <person name="Moreno Traspas R."/>
            <person name="Nabavizadeh N."/>
            <person name="Rass-Rothschild A."/>
            <person name="Boisson B."/>
            <person name="Drutman S.B."/>
            <person name="Laohamonthonkul P."/>
            <person name="Bonner D."/>
            <person name="Xiong J.R."/>
            <person name="Gorrell M.D."/>
            <person name="Davidson S."/>
            <person name="Yu C.H."/>
            <person name="Fleming M.D."/>
            <person name="Gudera J."/>
            <person name="Stein J."/>
            <person name="Ben-Harosh M."/>
            <person name="Groopman E."/>
            <person name="Shimamura A."/>
            <person name="Tamary H."/>
            <person name="Kayserili H."/>
            <person name="Hatipoglu N."/>
            <person name="Casanova J.L."/>
            <person name="Bernstein J.A."/>
            <person name="Zhong F.L."/>
            <person name="Masters S.L."/>
            <person name="Reversade B."/>
        </authorList>
    </citation>
    <scope>FUNCTION</scope>
    <scope>DISRUPTION PHENOTYPE</scope>
</reference>
<evidence type="ECO:0000250" key="1">
    <source>
        <dbReference type="UniProtKB" id="Q6V1X1"/>
    </source>
</evidence>
<evidence type="ECO:0000250" key="2">
    <source>
        <dbReference type="UniProtKB" id="Q86TI2"/>
    </source>
</evidence>
<evidence type="ECO:0000269" key="3">
    <source>
    </source>
</evidence>
<evidence type="ECO:0000303" key="4">
    <source>
    </source>
</evidence>
<evidence type="ECO:0000305" key="5"/>
<name>DPP9_DANRE</name>
<proteinExistence type="inferred from homology"/>
<keyword id="KW-0031">Aminopeptidase</keyword>
<keyword id="KW-0378">Hydrolase</keyword>
<keyword id="KW-0539">Nucleus</keyword>
<keyword id="KW-0645">Protease</keyword>
<keyword id="KW-1185">Reference proteome</keyword>
<keyword id="KW-0720">Serine protease</keyword>
<gene>
    <name evidence="4" type="primary">dpp9</name>
    <name type="synonym">zgc:152900</name>
</gene>